<proteinExistence type="inferred from homology"/>
<gene>
    <name evidence="1" type="primary">mgsA</name>
    <name type="ordered locus">Bsph_1980</name>
</gene>
<dbReference type="EC" id="4.2.3.3" evidence="1"/>
<dbReference type="EMBL" id="CP000817">
    <property type="protein sequence ID" value="ACA39567.1"/>
    <property type="molecule type" value="Genomic_DNA"/>
</dbReference>
<dbReference type="RefSeq" id="WP_008181558.1">
    <property type="nucleotide sequence ID" value="NC_010382.1"/>
</dbReference>
<dbReference type="SMR" id="B1HTF1"/>
<dbReference type="EnsemblBacteria" id="ACA39567">
    <property type="protein sequence ID" value="ACA39567"/>
    <property type="gene ID" value="Bsph_1980"/>
</dbReference>
<dbReference type="KEGG" id="lsp:Bsph_1980"/>
<dbReference type="HOGENOM" id="CLU_120420_1_0_9"/>
<dbReference type="Proteomes" id="UP000002164">
    <property type="component" value="Chromosome"/>
</dbReference>
<dbReference type="GO" id="GO:0005829">
    <property type="term" value="C:cytosol"/>
    <property type="evidence" value="ECO:0007669"/>
    <property type="project" value="TreeGrafter"/>
</dbReference>
<dbReference type="GO" id="GO:0008929">
    <property type="term" value="F:methylglyoxal synthase activity"/>
    <property type="evidence" value="ECO:0007669"/>
    <property type="project" value="UniProtKB-UniRule"/>
</dbReference>
<dbReference type="GO" id="GO:0019242">
    <property type="term" value="P:methylglyoxal biosynthetic process"/>
    <property type="evidence" value="ECO:0007669"/>
    <property type="project" value="UniProtKB-UniRule"/>
</dbReference>
<dbReference type="CDD" id="cd01422">
    <property type="entry name" value="MGS"/>
    <property type="match status" value="1"/>
</dbReference>
<dbReference type="FunFam" id="3.40.50.1380:FF:000006">
    <property type="entry name" value="Methylglyoxal synthase"/>
    <property type="match status" value="1"/>
</dbReference>
<dbReference type="Gene3D" id="3.40.50.1380">
    <property type="entry name" value="Methylglyoxal synthase-like domain"/>
    <property type="match status" value="1"/>
</dbReference>
<dbReference type="HAMAP" id="MF_00549">
    <property type="entry name" value="Methylglyoxal_synth"/>
    <property type="match status" value="1"/>
</dbReference>
<dbReference type="InterPro" id="IPR004363">
    <property type="entry name" value="Methylgl_synth"/>
</dbReference>
<dbReference type="InterPro" id="IPR018148">
    <property type="entry name" value="Methylglyoxal_synth_AS"/>
</dbReference>
<dbReference type="InterPro" id="IPR011607">
    <property type="entry name" value="MGS-like_dom"/>
</dbReference>
<dbReference type="InterPro" id="IPR036914">
    <property type="entry name" value="MGS-like_dom_sf"/>
</dbReference>
<dbReference type="NCBIfam" id="TIGR00160">
    <property type="entry name" value="MGSA"/>
    <property type="match status" value="1"/>
</dbReference>
<dbReference type="NCBIfam" id="NF003559">
    <property type="entry name" value="PRK05234.1"/>
    <property type="match status" value="1"/>
</dbReference>
<dbReference type="PANTHER" id="PTHR30492">
    <property type="entry name" value="METHYLGLYOXAL SYNTHASE"/>
    <property type="match status" value="1"/>
</dbReference>
<dbReference type="PANTHER" id="PTHR30492:SF0">
    <property type="entry name" value="METHYLGLYOXAL SYNTHASE"/>
    <property type="match status" value="1"/>
</dbReference>
<dbReference type="Pfam" id="PF02142">
    <property type="entry name" value="MGS"/>
    <property type="match status" value="1"/>
</dbReference>
<dbReference type="PIRSF" id="PIRSF006614">
    <property type="entry name" value="Methylglyox_syn"/>
    <property type="match status" value="1"/>
</dbReference>
<dbReference type="SMART" id="SM00851">
    <property type="entry name" value="MGS"/>
    <property type="match status" value="1"/>
</dbReference>
<dbReference type="SUPFAM" id="SSF52335">
    <property type="entry name" value="Methylglyoxal synthase-like"/>
    <property type="match status" value="1"/>
</dbReference>
<dbReference type="PROSITE" id="PS01335">
    <property type="entry name" value="METHYLGLYOXAL_SYNTH"/>
    <property type="match status" value="1"/>
</dbReference>
<dbReference type="PROSITE" id="PS51855">
    <property type="entry name" value="MGS"/>
    <property type="match status" value="1"/>
</dbReference>
<accession>B1HTF1</accession>
<reference key="1">
    <citation type="journal article" date="2008" name="J. Bacteriol.">
        <title>Complete genome sequence of the mosquitocidal bacterium Bacillus sphaericus C3-41 and comparison with those of closely related Bacillus species.</title>
        <authorList>
            <person name="Hu X."/>
            <person name="Fan W."/>
            <person name="Han B."/>
            <person name="Liu H."/>
            <person name="Zheng D."/>
            <person name="Li Q."/>
            <person name="Dong W."/>
            <person name="Yan J."/>
            <person name="Gao M."/>
            <person name="Berry C."/>
            <person name="Yuan Z."/>
        </authorList>
    </citation>
    <scope>NUCLEOTIDE SEQUENCE [LARGE SCALE GENOMIC DNA]</scope>
    <source>
        <strain>C3-41</strain>
    </source>
</reference>
<sequence>MKIALIAHDRKKDNLVQFAIAYKEILLEHSLYATGTTGQRVIEATGLEVTRFRSGPLGGDQQIGAMIANNDMDMVIFFRDPLTAQPHEPDVSALIRLCDVYQVPLATNMGTAEILLKGLQEGFVDWRLIQERRN</sequence>
<name>MGSA_LYSSC</name>
<protein>
    <recommendedName>
        <fullName evidence="1">Methylglyoxal synthase</fullName>
        <shortName evidence="1">MGS</shortName>
        <ecNumber evidence="1">4.2.3.3</ecNumber>
    </recommendedName>
</protein>
<organism>
    <name type="scientific">Lysinibacillus sphaericus (strain C3-41)</name>
    <dbReference type="NCBI Taxonomy" id="444177"/>
    <lineage>
        <taxon>Bacteria</taxon>
        <taxon>Bacillati</taxon>
        <taxon>Bacillota</taxon>
        <taxon>Bacilli</taxon>
        <taxon>Bacillales</taxon>
        <taxon>Bacillaceae</taxon>
        <taxon>Lysinibacillus</taxon>
    </lineage>
</organism>
<keyword id="KW-0456">Lyase</keyword>
<comment type="function">
    <text evidence="1">Catalyzes the formation of methylglyoxal from dihydroxyacetone phosphate.</text>
</comment>
<comment type="catalytic activity">
    <reaction evidence="1">
        <text>dihydroxyacetone phosphate = methylglyoxal + phosphate</text>
        <dbReference type="Rhea" id="RHEA:17937"/>
        <dbReference type="ChEBI" id="CHEBI:17158"/>
        <dbReference type="ChEBI" id="CHEBI:43474"/>
        <dbReference type="ChEBI" id="CHEBI:57642"/>
        <dbReference type="EC" id="4.2.3.3"/>
    </reaction>
</comment>
<comment type="similarity">
    <text evidence="1">Belongs to the methylglyoxal synthase family.</text>
</comment>
<evidence type="ECO:0000255" key="1">
    <source>
        <dbReference type="HAMAP-Rule" id="MF_00549"/>
    </source>
</evidence>
<feature type="chain" id="PRO_1000128998" description="Methylglyoxal synthase">
    <location>
        <begin position="1"/>
        <end position="134"/>
    </location>
</feature>
<feature type="domain" description="MGS-like" evidence="1">
    <location>
        <begin position="1"/>
        <end position="134"/>
    </location>
</feature>
<feature type="active site" description="Proton donor/acceptor" evidence="1">
    <location>
        <position position="60"/>
    </location>
</feature>
<feature type="binding site" evidence="1">
    <location>
        <position position="8"/>
    </location>
    <ligand>
        <name>substrate</name>
    </ligand>
</feature>
<feature type="binding site" evidence="1">
    <location>
        <position position="12"/>
    </location>
    <ligand>
        <name>substrate</name>
    </ligand>
</feature>
<feature type="binding site" evidence="1">
    <location>
        <begin position="34"/>
        <end position="37"/>
    </location>
    <ligand>
        <name>substrate</name>
    </ligand>
</feature>
<feature type="binding site" evidence="1">
    <location>
        <begin position="54"/>
        <end position="55"/>
    </location>
    <ligand>
        <name>substrate</name>
    </ligand>
</feature>
<feature type="binding site" evidence="1">
    <location>
        <position position="87"/>
    </location>
    <ligand>
        <name>substrate</name>
    </ligand>
</feature>